<reference key="1">
    <citation type="journal article" date="2001" name="Proc. Natl. Acad. Sci. U.S.A.">
        <title>Complete genomic sequence of Pasteurella multocida Pm70.</title>
        <authorList>
            <person name="May B.J."/>
            <person name="Zhang Q."/>
            <person name="Li L.L."/>
            <person name="Paustian M.L."/>
            <person name="Whittam T.S."/>
            <person name="Kapur V."/>
        </authorList>
    </citation>
    <scope>NUCLEOTIDE SEQUENCE [LARGE SCALE GENOMIC DNA]</scope>
    <source>
        <strain>Pm70</strain>
    </source>
</reference>
<proteinExistence type="inferred from homology"/>
<protein>
    <recommendedName>
        <fullName evidence="1">Anaerobic glycerol-3-phosphate dehydrogenase subunit B</fullName>
        <shortName evidence="1">Anaerobic G-3-P dehydrogenase subunit B</shortName>
        <shortName evidence="1">Anaerobic G3Pdhase B</shortName>
        <ecNumber evidence="1">1.1.5.3</ecNumber>
    </recommendedName>
</protein>
<feature type="chain" id="PRO_0000204564" description="Anaerobic glycerol-3-phosphate dehydrogenase subunit B">
    <location>
        <begin position="1"/>
        <end position="428"/>
    </location>
</feature>
<name>GLPB_PASMU</name>
<gene>
    <name evidence="1" type="primary">glpB</name>
    <name type="ordered locus">PM1441</name>
</gene>
<keyword id="KW-0285">Flavoprotein</keyword>
<keyword id="KW-0288">FMN</keyword>
<keyword id="KW-0560">Oxidoreductase</keyword>
<keyword id="KW-1185">Reference proteome</keyword>
<dbReference type="EC" id="1.1.5.3" evidence="1"/>
<dbReference type="EMBL" id="AE004439">
    <property type="protein sequence ID" value="AAK03525.1"/>
    <property type="status" value="ALT_INIT"/>
    <property type="molecule type" value="Genomic_DNA"/>
</dbReference>
<dbReference type="RefSeq" id="WP_005724104.1">
    <property type="nucleotide sequence ID" value="NC_002663.1"/>
</dbReference>
<dbReference type="STRING" id="272843.PM1441"/>
<dbReference type="EnsemblBacteria" id="AAK03525">
    <property type="protein sequence ID" value="AAK03525"/>
    <property type="gene ID" value="PM1441"/>
</dbReference>
<dbReference type="KEGG" id="pmu:PM1441"/>
<dbReference type="PATRIC" id="fig|272843.6.peg.1455"/>
<dbReference type="HOGENOM" id="CLU_047793_0_0_6"/>
<dbReference type="OrthoDB" id="6395323at2"/>
<dbReference type="UniPathway" id="UPA00618">
    <property type="reaction ID" value="UER00673"/>
</dbReference>
<dbReference type="Proteomes" id="UP000000809">
    <property type="component" value="Chromosome"/>
</dbReference>
<dbReference type="GO" id="GO:0009331">
    <property type="term" value="C:glycerol-3-phosphate dehydrogenase (FAD) complex"/>
    <property type="evidence" value="ECO:0007669"/>
    <property type="project" value="InterPro"/>
</dbReference>
<dbReference type="GO" id="GO:0004368">
    <property type="term" value="F:glycerol-3-phosphate dehydrogenase (quinone) activity"/>
    <property type="evidence" value="ECO:0007669"/>
    <property type="project" value="UniProtKB-UniRule"/>
</dbReference>
<dbReference type="GO" id="GO:0019563">
    <property type="term" value="P:glycerol catabolic process"/>
    <property type="evidence" value="ECO:0007669"/>
    <property type="project" value="UniProtKB-UniRule"/>
</dbReference>
<dbReference type="Gene3D" id="3.50.50.60">
    <property type="entry name" value="FAD/NAD(P)-binding domain"/>
    <property type="match status" value="1"/>
</dbReference>
<dbReference type="HAMAP" id="MF_00753">
    <property type="entry name" value="Glycerol3P_GlpB"/>
    <property type="match status" value="1"/>
</dbReference>
<dbReference type="InterPro" id="IPR003953">
    <property type="entry name" value="FAD-dep_OxRdtase_2_FAD-bd"/>
</dbReference>
<dbReference type="InterPro" id="IPR050315">
    <property type="entry name" value="FAD-oxidoreductase_2"/>
</dbReference>
<dbReference type="InterPro" id="IPR036188">
    <property type="entry name" value="FAD/NAD-bd_sf"/>
</dbReference>
<dbReference type="InterPro" id="IPR009158">
    <property type="entry name" value="G3P_DH_GlpB_su"/>
</dbReference>
<dbReference type="NCBIfam" id="TIGR03378">
    <property type="entry name" value="glycerol3P_GlpB"/>
    <property type="match status" value="1"/>
</dbReference>
<dbReference type="NCBIfam" id="NF003718">
    <property type="entry name" value="PRK05329.1-1"/>
    <property type="match status" value="1"/>
</dbReference>
<dbReference type="NCBIfam" id="NF003719">
    <property type="entry name" value="PRK05329.1-2"/>
    <property type="match status" value="1"/>
</dbReference>
<dbReference type="NCBIfam" id="NF003720">
    <property type="entry name" value="PRK05329.1-3"/>
    <property type="match status" value="1"/>
</dbReference>
<dbReference type="NCBIfam" id="NF003721">
    <property type="entry name" value="PRK05329.1-4"/>
    <property type="match status" value="1"/>
</dbReference>
<dbReference type="PANTHER" id="PTHR43400:SF11">
    <property type="entry name" value="ANAEROBIC GLYCEROL-3-PHOSPHATE DEHYDROGENASE SUBUNIT B"/>
    <property type="match status" value="1"/>
</dbReference>
<dbReference type="PANTHER" id="PTHR43400">
    <property type="entry name" value="FUMARATE REDUCTASE"/>
    <property type="match status" value="1"/>
</dbReference>
<dbReference type="Pfam" id="PF00890">
    <property type="entry name" value="FAD_binding_2"/>
    <property type="match status" value="1"/>
</dbReference>
<dbReference type="PIRSF" id="PIRSF000141">
    <property type="entry name" value="Anaerobic_G3P_dh"/>
    <property type="match status" value="1"/>
</dbReference>
<dbReference type="SUPFAM" id="SSF51905">
    <property type="entry name" value="FAD/NAD(P)-binding domain"/>
    <property type="match status" value="1"/>
</dbReference>
<accession>Q9CL07</accession>
<sequence>MNFDVVIIGGGLAGLTCGIALQTQGKQCVIINNGQAAIDFSSGSLDLLGQLPSGRQIQHFEQNYTALYQQAAQHPYALVGKDKVIEKARQFEQLAQTLNLGLVGTCDKNHFRVTPLGGLRPTWLSPNSVPIVTNEEMFPHRKIAVLGIEGYHDFQPQLLAENLVQHAQFAHCEVTTGYLNIPELDHLRHQSREFRSVNIAQLLEHKLAFSDLVREIREAVNGASAVFLPACFGLETQEFFSALKQATQLELFELPTLPPSLLGMRQHKQLTQHFKQLGGLMMNGDKVIAADVHHQRVTQVYTQLHQEIPIQAKDVVLASGSFFSKGLVAEFEKIREPIFALDLVENDRFNLQDRMTWTHSRFSAPQPYQQTGVVIDEHCRARKSGQFFENLYAIGNIVGGFNGIELGCGSGVAIVTALVAAEQIGGEK</sequence>
<evidence type="ECO:0000255" key="1">
    <source>
        <dbReference type="HAMAP-Rule" id="MF_00753"/>
    </source>
</evidence>
<evidence type="ECO:0000305" key="2"/>
<organism>
    <name type="scientific">Pasteurella multocida (strain Pm70)</name>
    <dbReference type="NCBI Taxonomy" id="272843"/>
    <lineage>
        <taxon>Bacteria</taxon>
        <taxon>Pseudomonadati</taxon>
        <taxon>Pseudomonadota</taxon>
        <taxon>Gammaproteobacteria</taxon>
        <taxon>Pasteurellales</taxon>
        <taxon>Pasteurellaceae</taxon>
        <taxon>Pasteurella</taxon>
    </lineage>
</organism>
<comment type="function">
    <text evidence="1">Conversion of glycerol 3-phosphate to dihydroxyacetone. Uses fumarate or nitrate as electron acceptor.</text>
</comment>
<comment type="catalytic activity">
    <reaction evidence="1">
        <text>a quinone + sn-glycerol 3-phosphate = dihydroxyacetone phosphate + a quinol</text>
        <dbReference type="Rhea" id="RHEA:18977"/>
        <dbReference type="ChEBI" id="CHEBI:24646"/>
        <dbReference type="ChEBI" id="CHEBI:57597"/>
        <dbReference type="ChEBI" id="CHEBI:57642"/>
        <dbReference type="ChEBI" id="CHEBI:132124"/>
        <dbReference type="EC" id="1.1.5.3"/>
    </reaction>
</comment>
<comment type="cofactor">
    <cofactor evidence="1">
        <name>FMN</name>
        <dbReference type="ChEBI" id="CHEBI:58210"/>
    </cofactor>
</comment>
<comment type="pathway">
    <text evidence="1">Polyol metabolism; glycerol degradation via glycerol kinase pathway; glycerone phosphate from sn-glycerol 3-phosphate (anaerobic route): step 1/1.</text>
</comment>
<comment type="subunit">
    <text evidence="1">Composed of a catalytic GlpA/B dimer and of membrane bound GlpC.</text>
</comment>
<comment type="similarity">
    <text evidence="1">Belongs to the anaerobic G-3-P dehydrogenase subunit B family.</text>
</comment>
<comment type="sequence caution" evidence="2">
    <conflict type="erroneous initiation">
        <sequence resource="EMBL-CDS" id="AAK03525"/>
    </conflict>
</comment>